<sequence length="368" mass="40645">MFYYLYDLYFNHLDSLRIFSYVTFRALMAGLTSMLVTFWFGHKIIDFLYGLKFRESVRDDGPKSHEIKKGTPTMGGLLIIGSLLISVLLWGNLKNPNVILLSVFSLSFSVLGFADDYMKSVKKIKGGMRARTKFILSILISFIFCILFFYYTGTTGQTGKISFQLTDLFFPFIKGPVIALGIIAIPFSILVIIGSSHAVNLTDGLDGLATGTVLISVMTLGVIAYFSGTPIVANYLNIPYLPGAHEYSVFLSALTGALFGFLWFNAHPAQVFMGDTGSLFLGATLGMIVILLKKEILLLILGAIFVSEALSVILQVGSFKLTGKRIFKMAPLHHHFELGGLKETKIVIRFWIIAVILAIISLSTLKIQ</sequence>
<dbReference type="EC" id="2.7.8.13" evidence="1"/>
<dbReference type="EMBL" id="AE016823">
    <property type="protein sequence ID" value="AAS70452.1"/>
    <property type="molecule type" value="Genomic_DNA"/>
</dbReference>
<dbReference type="RefSeq" id="WP_000500387.1">
    <property type="nucleotide sequence ID" value="NC_005823.1"/>
</dbReference>
<dbReference type="SMR" id="Q72R82"/>
<dbReference type="GeneID" id="61141762"/>
<dbReference type="KEGG" id="lic:LIC_11866"/>
<dbReference type="HOGENOM" id="CLU_023982_0_0_12"/>
<dbReference type="UniPathway" id="UPA00219"/>
<dbReference type="Proteomes" id="UP000007037">
    <property type="component" value="Chromosome I"/>
</dbReference>
<dbReference type="GO" id="GO:0005886">
    <property type="term" value="C:plasma membrane"/>
    <property type="evidence" value="ECO:0007669"/>
    <property type="project" value="UniProtKB-SubCell"/>
</dbReference>
<dbReference type="GO" id="GO:0046872">
    <property type="term" value="F:metal ion binding"/>
    <property type="evidence" value="ECO:0007669"/>
    <property type="project" value="UniProtKB-KW"/>
</dbReference>
<dbReference type="GO" id="GO:0008963">
    <property type="term" value="F:phospho-N-acetylmuramoyl-pentapeptide-transferase activity"/>
    <property type="evidence" value="ECO:0007669"/>
    <property type="project" value="UniProtKB-UniRule"/>
</dbReference>
<dbReference type="GO" id="GO:0051992">
    <property type="term" value="F:UDP-N-acetylmuramoyl-L-alanyl-D-glutamyl-meso-2,6-diaminopimelyl-D-alanyl-D-alanine:undecaprenyl-phosphate transferase activity"/>
    <property type="evidence" value="ECO:0007669"/>
    <property type="project" value="RHEA"/>
</dbReference>
<dbReference type="GO" id="GO:0051301">
    <property type="term" value="P:cell division"/>
    <property type="evidence" value="ECO:0007669"/>
    <property type="project" value="UniProtKB-KW"/>
</dbReference>
<dbReference type="GO" id="GO:0071555">
    <property type="term" value="P:cell wall organization"/>
    <property type="evidence" value="ECO:0007669"/>
    <property type="project" value="UniProtKB-KW"/>
</dbReference>
<dbReference type="GO" id="GO:0009252">
    <property type="term" value="P:peptidoglycan biosynthetic process"/>
    <property type="evidence" value="ECO:0007669"/>
    <property type="project" value="UniProtKB-UniRule"/>
</dbReference>
<dbReference type="GO" id="GO:0008360">
    <property type="term" value="P:regulation of cell shape"/>
    <property type="evidence" value="ECO:0007669"/>
    <property type="project" value="UniProtKB-KW"/>
</dbReference>
<dbReference type="CDD" id="cd06852">
    <property type="entry name" value="GT_MraY"/>
    <property type="match status" value="1"/>
</dbReference>
<dbReference type="HAMAP" id="MF_00038">
    <property type="entry name" value="MraY"/>
    <property type="match status" value="1"/>
</dbReference>
<dbReference type="InterPro" id="IPR000715">
    <property type="entry name" value="Glycosyl_transferase_4"/>
</dbReference>
<dbReference type="InterPro" id="IPR003524">
    <property type="entry name" value="PNAcMuramoyl-5peptid_Trfase"/>
</dbReference>
<dbReference type="InterPro" id="IPR018480">
    <property type="entry name" value="PNAcMuramoyl-5peptid_Trfase_CS"/>
</dbReference>
<dbReference type="NCBIfam" id="TIGR00445">
    <property type="entry name" value="mraY"/>
    <property type="match status" value="1"/>
</dbReference>
<dbReference type="PANTHER" id="PTHR22926">
    <property type="entry name" value="PHOSPHO-N-ACETYLMURAMOYL-PENTAPEPTIDE-TRANSFERASE"/>
    <property type="match status" value="1"/>
</dbReference>
<dbReference type="PANTHER" id="PTHR22926:SF5">
    <property type="entry name" value="PHOSPHO-N-ACETYLMURAMOYL-PENTAPEPTIDE-TRANSFERASE HOMOLOG"/>
    <property type="match status" value="1"/>
</dbReference>
<dbReference type="Pfam" id="PF00953">
    <property type="entry name" value="Glycos_transf_4"/>
    <property type="match status" value="1"/>
</dbReference>
<dbReference type="Pfam" id="PF10555">
    <property type="entry name" value="MraY_sig1"/>
    <property type="match status" value="1"/>
</dbReference>
<dbReference type="PROSITE" id="PS01347">
    <property type="entry name" value="MRAY_1"/>
    <property type="match status" value="1"/>
</dbReference>
<dbReference type="PROSITE" id="PS01348">
    <property type="entry name" value="MRAY_2"/>
    <property type="match status" value="1"/>
</dbReference>
<feature type="chain" id="PRO_0000108846" description="Phospho-N-acetylmuramoyl-pentapeptide-transferase">
    <location>
        <begin position="1"/>
        <end position="368"/>
    </location>
</feature>
<feature type="transmembrane region" description="Helical" evidence="1">
    <location>
        <begin position="31"/>
        <end position="51"/>
    </location>
</feature>
<feature type="transmembrane region" description="Helical" evidence="1">
    <location>
        <begin position="73"/>
        <end position="93"/>
    </location>
</feature>
<feature type="transmembrane region" description="Helical" evidence="1">
    <location>
        <begin position="98"/>
        <end position="118"/>
    </location>
</feature>
<feature type="transmembrane region" description="Helical" evidence="1">
    <location>
        <begin position="134"/>
        <end position="154"/>
    </location>
</feature>
<feature type="transmembrane region" description="Helical" evidence="1">
    <location>
        <begin position="175"/>
        <end position="195"/>
    </location>
</feature>
<feature type="transmembrane region" description="Helical" evidence="1">
    <location>
        <begin position="213"/>
        <end position="233"/>
    </location>
</feature>
<feature type="transmembrane region" description="Helical" evidence="1">
    <location>
        <begin position="249"/>
        <end position="269"/>
    </location>
</feature>
<feature type="transmembrane region" description="Helical" evidence="1">
    <location>
        <begin position="271"/>
        <end position="291"/>
    </location>
</feature>
<feature type="transmembrane region" description="Helical" evidence="1">
    <location>
        <begin position="296"/>
        <end position="316"/>
    </location>
</feature>
<feature type="transmembrane region" description="Helical" evidence="1">
    <location>
        <begin position="345"/>
        <end position="365"/>
    </location>
</feature>
<gene>
    <name evidence="1" type="primary">mraY</name>
    <name type="ordered locus">LIC_11866</name>
</gene>
<evidence type="ECO:0000255" key="1">
    <source>
        <dbReference type="HAMAP-Rule" id="MF_00038"/>
    </source>
</evidence>
<accession>Q72R82</accession>
<proteinExistence type="inferred from homology"/>
<reference key="1">
    <citation type="journal article" date="2004" name="J. Bacteriol.">
        <title>Comparative genomics of two Leptospira interrogans serovars reveals novel insights into physiology and pathogenesis.</title>
        <authorList>
            <person name="Nascimento A.L.T.O."/>
            <person name="Ko A.I."/>
            <person name="Martins E.A.L."/>
            <person name="Monteiro-Vitorello C.B."/>
            <person name="Ho P.L."/>
            <person name="Haake D.A."/>
            <person name="Verjovski-Almeida S."/>
            <person name="Hartskeerl R.A."/>
            <person name="Marques M.V."/>
            <person name="Oliveira M.C."/>
            <person name="Menck C.F.M."/>
            <person name="Leite L.C.C."/>
            <person name="Carrer H."/>
            <person name="Coutinho L.L."/>
            <person name="Degrave W.M."/>
            <person name="Dellagostin O.A."/>
            <person name="El-Dorry H."/>
            <person name="Ferro E.S."/>
            <person name="Ferro M.I.T."/>
            <person name="Furlan L.R."/>
            <person name="Gamberini M."/>
            <person name="Giglioti E.A."/>
            <person name="Goes-Neto A."/>
            <person name="Goldman G.H."/>
            <person name="Goldman M.H.S."/>
            <person name="Harakava R."/>
            <person name="Jeronimo S.M.B."/>
            <person name="Junqueira-de-Azevedo I.L.M."/>
            <person name="Kimura E.T."/>
            <person name="Kuramae E.E."/>
            <person name="Lemos E.G.M."/>
            <person name="Lemos M.V.F."/>
            <person name="Marino C.L."/>
            <person name="Nunes L.R."/>
            <person name="de Oliveira R.C."/>
            <person name="Pereira G.G."/>
            <person name="Reis M.S."/>
            <person name="Schriefer A."/>
            <person name="Siqueira W.J."/>
            <person name="Sommer P."/>
            <person name="Tsai S.M."/>
            <person name="Simpson A.J.G."/>
            <person name="Ferro J.A."/>
            <person name="Camargo L.E.A."/>
            <person name="Kitajima J.P."/>
            <person name="Setubal J.C."/>
            <person name="Van Sluys M.A."/>
        </authorList>
    </citation>
    <scope>NUCLEOTIDE SEQUENCE [LARGE SCALE GENOMIC DNA]</scope>
    <source>
        <strain>Fiocruz L1-130</strain>
    </source>
</reference>
<name>MRAY_LEPIC</name>
<keyword id="KW-0131">Cell cycle</keyword>
<keyword id="KW-0132">Cell division</keyword>
<keyword id="KW-0997">Cell inner membrane</keyword>
<keyword id="KW-1003">Cell membrane</keyword>
<keyword id="KW-0133">Cell shape</keyword>
<keyword id="KW-0961">Cell wall biogenesis/degradation</keyword>
<keyword id="KW-0460">Magnesium</keyword>
<keyword id="KW-0472">Membrane</keyword>
<keyword id="KW-0479">Metal-binding</keyword>
<keyword id="KW-0573">Peptidoglycan synthesis</keyword>
<keyword id="KW-0808">Transferase</keyword>
<keyword id="KW-0812">Transmembrane</keyword>
<keyword id="KW-1133">Transmembrane helix</keyword>
<protein>
    <recommendedName>
        <fullName evidence="1">Phospho-N-acetylmuramoyl-pentapeptide-transferase</fullName>
        <ecNumber evidence="1">2.7.8.13</ecNumber>
    </recommendedName>
    <alternativeName>
        <fullName evidence="1">UDP-MurNAc-pentapeptide phosphotransferase</fullName>
    </alternativeName>
</protein>
<organism>
    <name type="scientific">Leptospira interrogans serogroup Icterohaemorrhagiae serovar copenhageni (strain Fiocruz L1-130)</name>
    <dbReference type="NCBI Taxonomy" id="267671"/>
    <lineage>
        <taxon>Bacteria</taxon>
        <taxon>Pseudomonadati</taxon>
        <taxon>Spirochaetota</taxon>
        <taxon>Spirochaetia</taxon>
        <taxon>Leptospirales</taxon>
        <taxon>Leptospiraceae</taxon>
        <taxon>Leptospira</taxon>
    </lineage>
</organism>
<comment type="function">
    <text evidence="1">Catalyzes the initial step of the lipid cycle reactions in the biosynthesis of the cell wall peptidoglycan: transfers peptidoglycan precursor phospho-MurNAc-pentapeptide from UDP-MurNAc-pentapeptide onto the lipid carrier undecaprenyl phosphate, yielding undecaprenyl-pyrophosphoryl-MurNAc-pentapeptide, known as lipid I.</text>
</comment>
<comment type="catalytic activity">
    <reaction evidence="1">
        <text>UDP-N-acetyl-alpha-D-muramoyl-L-alanyl-gamma-D-glutamyl-meso-2,6-diaminopimeloyl-D-alanyl-D-alanine + di-trans,octa-cis-undecaprenyl phosphate = di-trans,octa-cis-undecaprenyl diphospho-N-acetyl-alpha-D-muramoyl-L-alanyl-D-glutamyl-meso-2,6-diaminopimeloyl-D-alanyl-D-alanine + UMP</text>
        <dbReference type="Rhea" id="RHEA:28386"/>
        <dbReference type="ChEBI" id="CHEBI:57865"/>
        <dbReference type="ChEBI" id="CHEBI:60392"/>
        <dbReference type="ChEBI" id="CHEBI:61386"/>
        <dbReference type="ChEBI" id="CHEBI:61387"/>
        <dbReference type="EC" id="2.7.8.13"/>
    </reaction>
</comment>
<comment type="cofactor">
    <cofactor evidence="1">
        <name>Mg(2+)</name>
        <dbReference type="ChEBI" id="CHEBI:18420"/>
    </cofactor>
</comment>
<comment type="pathway">
    <text evidence="1">Cell wall biogenesis; peptidoglycan biosynthesis.</text>
</comment>
<comment type="subcellular location">
    <subcellularLocation>
        <location evidence="1">Cell inner membrane</location>
        <topology evidence="1">Multi-pass membrane protein</topology>
    </subcellularLocation>
</comment>
<comment type="similarity">
    <text evidence="1">Belongs to the glycosyltransferase 4 family. MraY subfamily.</text>
</comment>